<accession>B7LY11</accession>
<gene>
    <name evidence="1" type="primary">yciC</name>
    <name type="ordered locus">ECIAI1_1275</name>
</gene>
<proteinExistence type="inferred from homology"/>
<evidence type="ECO:0000255" key="1">
    <source>
        <dbReference type="HAMAP-Rule" id="MF_01067"/>
    </source>
</evidence>
<keyword id="KW-0997">Cell inner membrane</keyword>
<keyword id="KW-1003">Cell membrane</keyword>
<keyword id="KW-0472">Membrane</keyword>
<keyword id="KW-0812">Transmembrane</keyword>
<keyword id="KW-1133">Transmembrane helix</keyword>
<name>YCIC_ECO8A</name>
<organism>
    <name type="scientific">Escherichia coli O8 (strain IAI1)</name>
    <dbReference type="NCBI Taxonomy" id="585034"/>
    <lineage>
        <taxon>Bacteria</taxon>
        <taxon>Pseudomonadati</taxon>
        <taxon>Pseudomonadota</taxon>
        <taxon>Gammaproteobacteria</taxon>
        <taxon>Enterobacterales</taxon>
        <taxon>Enterobacteriaceae</taxon>
        <taxon>Escherichia</taxon>
    </lineage>
</organism>
<sequence length="247" mass="26433">MSITAQSVYRDTGNFFRNQFMTILLVSLLCAFITVVLGHVFSPSDAQLAQLNDGVPVSGSSGLFDLVQNMSPEQQQILLQASAASTFSGLIGNAILAGGVILIIQLVSAGQRVSALRAIGASAPILPKLFILIFLTTLLVQIGIMLVVVPGIIMAILLALAPVMLVQDKMGIFASMRSSMRLTWANMRLVAPAVLSWLLAKTLLLLFASSFAALTPEIGAVLANTLSNLISAILLIYLFRLYMLIRQ</sequence>
<feature type="chain" id="PRO_1000136581" description="UPF0259 membrane protein YciC">
    <location>
        <begin position="1"/>
        <end position="247"/>
    </location>
</feature>
<feature type="transmembrane region" description="Helical" evidence="1">
    <location>
        <begin position="20"/>
        <end position="40"/>
    </location>
</feature>
<feature type="transmembrane region" description="Helical" evidence="1">
    <location>
        <begin position="87"/>
        <end position="107"/>
    </location>
</feature>
<feature type="transmembrane region" description="Helical" evidence="1">
    <location>
        <begin position="118"/>
        <end position="140"/>
    </location>
</feature>
<feature type="transmembrane region" description="Helical" evidence="1">
    <location>
        <begin position="152"/>
        <end position="172"/>
    </location>
</feature>
<feature type="transmembrane region" description="Helical" evidence="1">
    <location>
        <begin position="187"/>
        <end position="209"/>
    </location>
</feature>
<feature type="transmembrane region" description="Helical" evidence="1">
    <location>
        <begin position="225"/>
        <end position="245"/>
    </location>
</feature>
<protein>
    <recommendedName>
        <fullName evidence="1">UPF0259 membrane protein YciC</fullName>
    </recommendedName>
</protein>
<dbReference type="EMBL" id="CU928160">
    <property type="protein sequence ID" value="CAQ98134.1"/>
    <property type="molecule type" value="Genomic_DNA"/>
</dbReference>
<dbReference type="RefSeq" id="WP_000028540.1">
    <property type="nucleotide sequence ID" value="NC_011741.1"/>
</dbReference>
<dbReference type="KEGG" id="ecr:ECIAI1_1275"/>
<dbReference type="HOGENOM" id="CLU_073287_0_0_6"/>
<dbReference type="GO" id="GO:0005886">
    <property type="term" value="C:plasma membrane"/>
    <property type="evidence" value="ECO:0007669"/>
    <property type="project" value="UniProtKB-SubCell"/>
</dbReference>
<dbReference type="HAMAP" id="MF_01067">
    <property type="entry name" value="UPF0259"/>
    <property type="match status" value="1"/>
</dbReference>
<dbReference type="InterPro" id="IPR009627">
    <property type="entry name" value="UPF0259"/>
</dbReference>
<dbReference type="NCBIfam" id="NF002774">
    <property type="entry name" value="PRK02868.1"/>
    <property type="match status" value="1"/>
</dbReference>
<dbReference type="Pfam" id="PF06790">
    <property type="entry name" value="UPF0259"/>
    <property type="match status" value="1"/>
</dbReference>
<reference key="1">
    <citation type="journal article" date="2009" name="PLoS Genet.">
        <title>Organised genome dynamics in the Escherichia coli species results in highly diverse adaptive paths.</title>
        <authorList>
            <person name="Touchon M."/>
            <person name="Hoede C."/>
            <person name="Tenaillon O."/>
            <person name="Barbe V."/>
            <person name="Baeriswyl S."/>
            <person name="Bidet P."/>
            <person name="Bingen E."/>
            <person name="Bonacorsi S."/>
            <person name="Bouchier C."/>
            <person name="Bouvet O."/>
            <person name="Calteau A."/>
            <person name="Chiapello H."/>
            <person name="Clermont O."/>
            <person name="Cruveiller S."/>
            <person name="Danchin A."/>
            <person name="Diard M."/>
            <person name="Dossat C."/>
            <person name="Karoui M.E."/>
            <person name="Frapy E."/>
            <person name="Garry L."/>
            <person name="Ghigo J.M."/>
            <person name="Gilles A.M."/>
            <person name="Johnson J."/>
            <person name="Le Bouguenec C."/>
            <person name="Lescat M."/>
            <person name="Mangenot S."/>
            <person name="Martinez-Jehanne V."/>
            <person name="Matic I."/>
            <person name="Nassif X."/>
            <person name="Oztas S."/>
            <person name="Petit M.A."/>
            <person name="Pichon C."/>
            <person name="Rouy Z."/>
            <person name="Ruf C.S."/>
            <person name="Schneider D."/>
            <person name="Tourret J."/>
            <person name="Vacherie B."/>
            <person name="Vallenet D."/>
            <person name="Medigue C."/>
            <person name="Rocha E.P.C."/>
            <person name="Denamur E."/>
        </authorList>
    </citation>
    <scope>NUCLEOTIDE SEQUENCE [LARGE SCALE GENOMIC DNA]</scope>
    <source>
        <strain>IAI1</strain>
    </source>
</reference>
<comment type="subcellular location">
    <subcellularLocation>
        <location evidence="1">Cell inner membrane</location>
        <topology evidence="1">Multi-pass membrane protein</topology>
    </subcellularLocation>
</comment>
<comment type="similarity">
    <text evidence="1">Belongs to the UPF0259 family.</text>
</comment>